<proteinExistence type="inferred from homology"/>
<comment type="function">
    <text evidence="1">Na(+)/H(+) antiporter that extrudes sodium in exchange for external protons.</text>
</comment>
<comment type="catalytic activity">
    <reaction evidence="1">
        <text>2 Na(+)(in) + 3 H(+)(out) = 2 Na(+)(out) + 3 H(+)(in)</text>
        <dbReference type="Rhea" id="RHEA:29247"/>
        <dbReference type="ChEBI" id="CHEBI:15378"/>
        <dbReference type="ChEBI" id="CHEBI:29101"/>
    </reaction>
    <physiologicalReaction direction="left-to-right" evidence="1">
        <dbReference type="Rhea" id="RHEA:29248"/>
    </physiologicalReaction>
</comment>
<comment type="subcellular location">
    <subcellularLocation>
        <location evidence="1">Cell inner membrane</location>
        <topology evidence="1">Multi-pass membrane protein</topology>
    </subcellularLocation>
</comment>
<comment type="similarity">
    <text evidence="1">Belongs to the NhaB Na(+)/H(+) (TC 2.A.34) antiporter family.</text>
</comment>
<protein>
    <recommendedName>
        <fullName evidence="1">Na(+)/H(+) antiporter NhaB</fullName>
    </recommendedName>
    <alternativeName>
        <fullName evidence="1">Sodium/proton antiporter NhaB</fullName>
    </alternativeName>
</protein>
<dbReference type="EMBL" id="CP000891">
    <property type="protein sequence ID" value="ABX48985.1"/>
    <property type="molecule type" value="Genomic_DNA"/>
</dbReference>
<dbReference type="RefSeq" id="WP_006081283.1">
    <property type="nucleotide sequence ID" value="NC_009997.1"/>
</dbReference>
<dbReference type="SMR" id="A9KY79"/>
<dbReference type="GeneID" id="11772033"/>
<dbReference type="KEGG" id="sbn:Sbal195_1814"/>
<dbReference type="HOGENOM" id="CLU_041110_0_0_6"/>
<dbReference type="Proteomes" id="UP000000770">
    <property type="component" value="Chromosome"/>
</dbReference>
<dbReference type="GO" id="GO:0005886">
    <property type="term" value="C:plasma membrane"/>
    <property type="evidence" value="ECO:0007669"/>
    <property type="project" value="UniProtKB-SubCell"/>
</dbReference>
<dbReference type="GO" id="GO:0015385">
    <property type="term" value="F:sodium:proton antiporter activity"/>
    <property type="evidence" value="ECO:0007669"/>
    <property type="project" value="InterPro"/>
</dbReference>
<dbReference type="HAMAP" id="MF_01599">
    <property type="entry name" value="NhaB"/>
    <property type="match status" value="1"/>
</dbReference>
<dbReference type="InterPro" id="IPR004671">
    <property type="entry name" value="Na+/H+_antiporter_NhaB"/>
</dbReference>
<dbReference type="NCBIfam" id="TIGR00774">
    <property type="entry name" value="NhaB"/>
    <property type="match status" value="1"/>
</dbReference>
<dbReference type="NCBIfam" id="NF007093">
    <property type="entry name" value="PRK09547.1"/>
    <property type="match status" value="1"/>
</dbReference>
<dbReference type="PANTHER" id="PTHR43302:SF1">
    <property type="entry name" value="NA(+)_H(+) ANTIPORTER NHAB"/>
    <property type="match status" value="1"/>
</dbReference>
<dbReference type="PANTHER" id="PTHR43302">
    <property type="entry name" value="TRANSPORTER ARSB-RELATED"/>
    <property type="match status" value="1"/>
</dbReference>
<dbReference type="Pfam" id="PF06450">
    <property type="entry name" value="NhaB"/>
    <property type="match status" value="1"/>
</dbReference>
<evidence type="ECO:0000255" key="1">
    <source>
        <dbReference type="HAMAP-Rule" id="MF_01599"/>
    </source>
</evidence>
<accession>A9KY79</accession>
<name>NHAB_SHEB9</name>
<sequence>MPATMSQAFIGNFLGNSPKWYKTAILSFLIINPLLFFYVDPFVAGWVLVLEFIFTLAMALKCYPLQPGGLLAIEAVAIGMTSASQVLHEIEANLEVLLLLVFMVAGIYFMKQLLLFGFTKIITKVRSKVLVSLMFCLASAFLSAFLDALTVIAVIIAVAVGFYSIYHKVASGKDFGADHDHTSEGKNAAGEDQLNEEELGAFRGFLRNLLMHAGVGTALGGVCTMVGEPQNLIIAAQANWQFGEFAVRMSPVTVPVLISGILTCYLVEKFGIFGYGAKLPTAVHRILCEYAAHEDARRTNKDNMKLIVQALVGVWLIAGLALHLASVGLIGLSVIILTTAFNGVTDEHALGKAFEEALPFTALLAVFFAVVGVIIDQHLFAPVIQWALGYEGNTQLVIFYIANGLLSMVSDNVFVGTVYINEVKAALINGQITRDQFDLLAVAINTGTNLPSVATPNGQAAFLFLLTSALAPLIRLSYGRMVWMALPYTIVLSIVGVMAIQTGFLEQATQYFYDSHTIIHHSAKEVLGTVSGH</sequence>
<gene>
    <name evidence="1" type="primary">nhaB</name>
    <name type="ordered locus">Sbal195_1814</name>
</gene>
<feature type="chain" id="PRO_0000333126" description="Na(+)/H(+) antiporter NhaB">
    <location>
        <begin position="1"/>
        <end position="533"/>
    </location>
</feature>
<feature type="transmembrane region" description="Helical" evidence="1">
    <location>
        <begin position="28"/>
        <end position="50"/>
    </location>
</feature>
<feature type="transmembrane region" description="Helical" evidence="1">
    <location>
        <begin position="67"/>
        <end position="87"/>
    </location>
</feature>
<feature type="transmembrane region" description="Helical" evidence="1">
    <location>
        <begin position="96"/>
        <end position="116"/>
    </location>
</feature>
<feature type="transmembrane region" description="Helical" evidence="1">
    <location>
        <begin position="131"/>
        <end position="165"/>
    </location>
</feature>
<feature type="transmembrane region" description="Helical" evidence="1">
    <location>
        <begin position="254"/>
        <end position="274"/>
    </location>
</feature>
<feature type="transmembrane region" description="Helical" evidence="1">
    <location>
        <begin position="316"/>
        <end position="336"/>
    </location>
</feature>
<feature type="transmembrane region" description="Helical" evidence="1">
    <location>
        <begin position="364"/>
        <end position="384"/>
    </location>
</feature>
<feature type="transmembrane region" description="Helical" evidence="1">
    <location>
        <begin position="396"/>
        <end position="416"/>
    </location>
</feature>
<feature type="transmembrane region" description="Helical" evidence="1">
    <location>
        <begin position="454"/>
        <end position="474"/>
    </location>
</feature>
<feature type="transmembrane region" description="Helical" evidence="1">
    <location>
        <begin position="481"/>
        <end position="501"/>
    </location>
</feature>
<reference key="1">
    <citation type="submission" date="2007-11" db="EMBL/GenBank/DDBJ databases">
        <title>Complete sequence of chromosome of Shewanella baltica OS195.</title>
        <authorList>
            <consortium name="US DOE Joint Genome Institute"/>
            <person name="Copeland A."/>
            <person name="Lucas S."/>
            <person name="Lapidus A."/>
            <person name="Barry K."/>
            <person name="Glavina del Rio T."/>
            <person name="Dalin E."/>
            <person name="Tice H."/>
            <person name="Pitluck S."/>
            <person name="Chain P."/>
            <person name="Malfatti S."/>
            <person name="Shin M."/>
            <person name="Vergez L."/>
            <person name="Schmutz J."/>
            <person name="Larimer F."/>
            <person name="Land M."/>
            <person name="Hauser L."/>
            <person name="Kyrpides N."/>
            <person name="Kim E."/>
            <person name="Brettar I."/>
            <person name="Rodrigues J."/>
            <person name="Konstantinidis K."/>
            <person name="Klappenbach J."/>
            <person name="Hofle M."/>
            <person name="Tiedje J."/>
            <person name="Richardson P."/>
        </authorList>
    </citation>
    <scope>NUCLEOTIDE SEQUENCE [LARGE SCALE GENOMIC DNA]</scope>
    <source>
        <strain>OS195</strain>
    </source>
</reference>
<keyword id="KW-0050">Antiport</keyword>
<keyword id="KW-0997">Cell inner membrane</keyword>
<keyword id="KW-1003">Cell membrane</keyword>
<keyword id="KW-0406">Ion transport</keyword>
<keyword id="KW-0472">Membrane</keyword>
<keyword id="KW-0915">Sodium</keyword>
<keyword id="KW-0739">Sodium transport</keyword>
<keyword id="KW-0812">Transmembrane</keyword>
<keyword id="KW-1133">Transmembrane helix</keyword>
<keyword id="KW-0813">Transport</keyword>
<organism>
    <name type="scientific">Shewanella baltica (strain OS195)</name>
    <dbReference type="NCBI Taxonomy" id="399599"/>
    <lineage>
        <taxon>Bacteria</taxon>
        <taxon>Pseudomonadati</taxon>
        <taxon>Pseudomonadota</taxon>
        <taxon>Gammaproteobacteria</taxon>
        <taxon>Alteromonadales</taxon>
        <taxon>Shewanellaceae</taxon>
        <taxon>Shewanella</taxon>
    </lineage>
</organism>